<feature type="chain" id="PRO_0000139753" description="Putative ammonium transporter 3">
    <location>
        <begin position="1"/>
        <end position="687"/>
    </location>
</feature>
<feature type="transmembrane region" description="Helical" evidence="1">
    <location>
        <begin position="39"/>
        <end position="59"/>
    </location>
</feature>
<feature type="transmembrane region" description="Helical" evidence="1">
    <location>
        <begin position="77"/>
        <end position="97"/>
    </location>
</feature>
<feature type="transmembrane region" description="Helical" evidence="1">
    <location>
        <begin position="134"/>
        <end position="154"/>
    </location>
</feature>
<feature type="transmembrane region" description="Helical" evidence="1">
    <location>
        <begin position="162"/>
        <end position="182"/>
    </location>
</feature>
<feature type="transmembrane region" description="Helical" evidence="1">
    <location>
        <begin position="196"/>
        <end position="216"/>
    </location>
</feature>
<feature type="transmembrane region" description="Helical" evidence="1">
    <location>
        <begin position="240"/>
        <end position="260"/>
    </location>
</feature>
<feature type="transmembrane region" description="Helical" evidence="1">
    <location>
        <begin position="272"/>
        <end position="292"/>
    </location>
</feature>
<feature type="transmembrane region" description="Helical" evidence="1">
    <location>
        <begin position="299"/>
        <end position="319"/>
    </location>
</feature>
<feature type="transmembrane region" description="Helical" evidence="1">
    <location>
        <begin position="323"/>
        <end position="343"/>
    </location>
</feature>
<feature type="transmembrane region" description="Helical" evidence="1">
    <location>
        <begin position="352"/>
        <end position="372"/>
    </location>
</feature>
<feature type="transmembrane region" description="Helical" evidence="1">
    <location>
        <begin position="404"/>
        <end position="424"/>
    </location>
</feature>
<feature type="region of interest" description="Disordered" evidence="2">
    <location>
        <begin position="521"/>
        <end position="544"/>
    </location>
</feature>
<feature type="region of interest" description="Disordered" evidence="2">
    <location>
        <begin position="549"/>
        <end position="568"/>
    </location>
</feature>
<feature type="region of interest" description="Disordered" evidence="2">
    <location>
        <begin position="592"/>
        <end position="687"/>
    </location>
</feature>
<feature type="compositionally biased region" description="Polar residues" evidence="2">
    <location>
        <begin position="549"/>
        <end position="564"/>
    </location>
</feature>
<feature type="compositionally biased region" description="Low complexity" evidence="2">
    <location>
        <begin position="614"/>
        <end position="632"/>
    </location>
</feature>
<feature type="compositionally biased region" description="Low complexity" evidence="2">
    <location>
        <begin position="648"/>
        <end position="665"/>
    </location>
</feature>
<evidence type="ECO:0000255" key="1"/>
<evidence type="ECO:0000256" key="2">
    <source>
        <dbReference type="SAM" id="MobiDB-lite"/>
    </source>
</evidence>
<evidence type="ECO:0000305" key="3"/>
<gene>
    <name type="primary">amt-3</name>
    <name type="ORF">M195.3</name>
</gene>
<comment type="function">
    <text evidence="3">Involved in the uptake of ammonia.</text>
</comment>
<comment type="subcellular location">
    <subcellularLocation>
        <location evidence="3">Membrane</location>
        <topology evidence="3">Multi-pass membrane protein</topology>
    </subcellularLocation>
</comment>
<comment type="similarity">
    <text evidence="3">Belongs to the ammonia transporter channel (TC 1.A.11.2) family.</text>
</comment>
<sequence>MAGPEGSIFNASAMQIVQIHHYAEGSVTPEVDKLYQDDAVWIISSSFIIFTMHSGFGLLESGSVSAKDEVNIMVKNVVDVVFGGLSYWSCGFGFSYGDIPEWRNPYVGFGKFFYDPTRDYGTRETINQEGWSYASFLFQLSLATTASTIVSGAVAERAKLKSYILLGCIVILIQALPAHWVWDKEGVFYKKGVVDFAGCSAVHLVGGIIGLIATVFLKPRRNRFNEDSVHQMSSPTNALLGTFLLWWGWFGINAGSVWGITGGRWRLGARAAVATIMASIGGGATAITISFVKTKKLQVNFLINGILSSIVSITAICAVSRPWHALVIGSISSVFSIAVLPLLDRLHIDDPVGIVPIHLTSSIWGMIAVGIFCEEDKYLGSATNNRSGLLYSWSFELLWVQLQCTAAILIYSATTGFLALFLISKSPLGLRVTDYEEQIGADVIEHGLAGTNVARYVLEKPLSTRTFQTVTKAITKWKMLAKKKSRQKRMEAAKLKRQEEQETFTNGTAIANGNGNVLHHRTNATESNGTGAPKRSNGPAFNNQITPLAVSSTVSTARNGPSTGRRTESTAIEIEQPIEAVPPEVVAAAVLPPEERPGPSTNSNVSIEASVEKSPSSSTSRRSISIRSSPSIHTVSAISTAAPDSRPSTASATSIISKKSSKNSTVGKFVKAPAPRALSPPDNNPPV</sequence>
<name>AMT3_CAEEL</name>
<keyword id="KW-0924">Ammonia transport</keyword>
<keyword id="KW-0472">Membrane</keyword>
<keyword id="KW-1185">Reference proteome</keyword>
<keyword id="KW-0812">Transmembrane</keyword>
<keyword id="KW-1133">Transmembrane helix</keyword>
<keyword id="KW-0813">Transport</keyword>
<organism>
    <name type="scientific">Caenorhabditis elegans</name>
    <dbReference type="NCBI Taxonomy" id="6239"/>
    <lineage>
        <taxon>Eukaryota</taxon>
        <taxon>Metazoa</taxon>
        <taxon>Ecdysozoa</taxon>
        <taxon>Nematoda</taxon>
        <taxon>Chromadorea</taxon>
        <taxon>Rhabditida</taxon>
        <taxon>Rhabditina</taxon>
        <taxon>Rhabditomorpha</taxon>
        <taxon>Rhabditoidea</taxon>
        <taxon>Rhabditidae</taxon>
        <taxon>Peloderinae</taxon>
        <taxon>Caenorhabditis</taxon>
    </lineage>
</organism>
<dbReference type="EMBL" id="Z66498">
    <property type="protein sequence ID" value="CAA91293.2"/>
    <property type="molecule type" value="Genomic_DNA"/>
</dbReference>
<dbReference type="PIR" id="T23804">
    <property type="entry name" value="T23804"/>
</dbReference>
<dbReference type="RefSeq" id="NP_495761.2">
    <property type="nucleotide sequence ID" value="NM_063360.6"/>
</dbReference>
<dbReference type="SMR" id="Q21565"/>
<dbReference type="FunCoup" id="Q21565">
    <property type="interactions" value="1"/>
</dbReference>
<dbReference type="STRING" id="6239.M195.3.1"/>
<dbReference type="PaxDb" id="6239-M195.3"/>
<dbReference type="EnsemblMetazoa" id="M195.3.1">
    <property type="protein sequence ID" value="M195.3.1"/>
    <property type="gene ID" value="WBGene00000135"/>
</dbReference>
<dbReference type="GeneID" id="174338"/>
<dbReference type="KEGG" id="cel:CELE_M195.3"/>
<dbReference type="UCSC" id="M195.3">
    <property type="organism name" value="c. elegans"/>
</dbReference>
<dbReference type="AGR" id="WB:WBGene00000135"/>
<dbReference type="CTD" id="174338"/>
<dbReference type="WormBase" id="M195.3">
    <property type="protein sequence ID" value="CE32912"/>
    <property type="gene ID" value="WBGene00000135"/>
    <property type="gene designation" value="amt-3"/>
</dbReference>
<dbReference type="eggNOG" id="KOG0682">
    <property type="taxonomic scope" value="Eukaryota"/>
</dbReference>
<dbReference type="GeneTree" id="ENSGT00530000064546"/>
<dbReference type="HOGENOM" id="CLU_000445_33_1_1"/>
<dbReference type="InParanoid" id="Q21565"/>
<dbReference type="OMA" id="QIHHYAE"/>
<dbReference type="OrthoDB" id="534912at2759"/>
<dbReference type="PhylomeDB" id="Q21565"/>
<dbReference type="PRO" id="PR:Q21565"/>
<dbReference type="Proteomes" id="UP000001940">
    <property type="component" value="Chromosome II"/>
</dbReference>
<dbReference type="Bgee" id="WBGene00000135">
    <property type="expression patterns" value="Expressed in larva and 2 other cell types or tissues"/>
</dbReference>
<dbReference type="GO" id="GO:0005886">
    <property type="term" value="C:plasma membrane"/>
    <property type="evidence" value="ECO:0000318"/>
    <property type="project" value="GO_Central"/>
</dbReference>
<dbReference type="GO" id="GO:0008519">
    <property type="term" value="F:ammonium channel activity"/>
    <property type="evidence" value="ECO:0000318"/>
    <property type="project" value="GO_Central"/>
</dbReference>
<dbReference type="GO" id="GO:0097272">
    <property type="term" value="P:ammonium homeostasis"/>
    <property type="evidence" value="ECO:0000318"/>
    <property type="project" value="GO_Central"/>
</dbReference>
<dbReference type="GO" id="GO:0072488">
    <property type="term" value="P:ammonium transmembrane transport"/>
    <property type="evidence" value="ECO:0000318"/>
    <property type="project" value="GO_Central"/>
</dbReference>
<dbReference type="FunFam" id="1.10.3430.10:FF:000008">
    <property type="entry name" value="Ammonium transporter"/>
    <property type="match status" value="1"/>
</dbReference>
<dbReference type="Gene3D" id="1.10.3430.10">
    <property type="entry name" value="Ammonium transporter AmtB like domains"/>
    <property type="match status" value="1"/>
</dbReference>
<dbReference type="InterPro" id="IPR029020">
    <property type="entry name" value="Ammonium/urea_transptr"/>
</dbReference>
<dbReference type="InterPro" id="IPR001905">
    <property type="entry name" value="Ammonium_transpt"/>
</dbReference>
<dbReference type="InterPro" id="IPR018047">
    <property type="entry name" value="Ammonium_transpt_CS"/>
</dbReference>
<dbReference type="InterPro" id="IPR024041">
    <property type="entry name" value="NH4_transpt_AmtB-like_dom"/>
</dbReference>
<dbReference type="NCBIfam" id="TIGR00836">
    <property type="entry name" value="amt"/>
    <property type="match status" value="1"/>
</dbReference>
<dbReference type="PANTHER" id="PTHR11730">
    <property type="entry name" value="AMMONIUM TRANSPORTER"/>
    <property type="match status" value="1"/>
</dbReference>
<dbReference type="PANTHER" id="PTHR11730:SF29">
    <property type="entry name" value="AMMONIUM TRANSPORTER 3-RELATED"/>
    <property type="match status" value="1"/>
</dbReference>
<dbReference type="Pfam" id="PF00909">
    <property type="entry name" value="Ammonium_transp"/>
    <property type="match status" value="1"/>
</dbReference>
<dbReference type="SUPFAM" id="SSF111352">
    <property type="entry name" value="Ammonium transporter"/>
    <property type="match status" value="1"/>
</dbReference>
<dbReference type="PROSITE" id="PS01219">
    <property type="entry name" value="AMMONIUM_TRANSP"/>
    <property type="match status" value="1"/>
</dbReference>
<reference key="1">
    <citation type="journal article" date="1998" name="Science">
        <title>Genome sequence of the nematode C. elegans: a platform for investigating biology.</title>
        <authorList>
            <consortium name="The C. elegans sequencing consortium"/>
        </authorList>
    </citation>
    <scope>NUCLEOTIDE SEQUENCE [LARGE SCALE GENOMIC DNA]</scope>
    <source>
        <strain>Bristol N2</strain>
    </source>
</reference>
<proteinExistence type="inferred from homology"/>
<accession>Q21565</accession>
<protein>
    <recommendedName>
        <fullName>Putative ammonium transporter 3</fullName>
    </recommendedName>
</protein>